<organism>
    <name type="scientific">Shewanella woodyi (strain ATCC 51908 / MS32)</name>
    <dbReference type="NCBI Taxonomy" id="392500"/>
    <lineage>
        <taxon>Bacteria</taxon>
        <taxon>Pseudomonadati</taxon>
        <taxon>Pseudomonadota</taxon>
        <taxon>Gammaproteobacteria</taxon>
        <taxon>Alteromonadales</taxon>
        <taxon>Shewanellaceae</taxon>
        <taxon>Shewanella</taxon>
    </lineage>
</organism>
<reference key="1">
    <citation type="submission" date="2008-02" db="EMBL/GenBank/DDBJ databases">
        <title>Complete sequence of Shewanella woodyi ATCC 51908.</title>
        <authorList>
            <consortium name="US DOE Joint Genome Institute"/>
            <person name="Copeland A."/>
            <person name="Lucas S."/>
            <person name="Lapidus A."/>
            <person name="Glavina del Rio T."/>
            <person name="Dalin E."/>
            <person name="Tice H."/>
            <person name="Bruce D."/>
            <person name="Goodwin L."/>
            <person name="Pitluck S."/>
            <person name="Sims D."/>
            <person name="Brettin T."/>
            <person name="Detter J.C."/>
            <person name="Han C."/>
            <person name="Kuske C.R."/>
            <person name="Schmutz J."/>
            <person name="Larimer F."/>
            <person name="Land M."/>
            <person name="Hauser L."/>
            <person name="Kyrpides N."/>
            <person name="Lykidis A."/>
            <person name="Zhao J.-S."/>
            <person name="Richardson P."/>
        </authorList>
    </citation>
    <scope>NUCLEOTIDE SEQUENCE [LARGE SCALE GENOMIC DNA]</scope>
    <source>
        <strain>ATCC 51908 / MS32</strain>
    </source>
</reference>
<proteinExistence type="inferred from homology"/>
<dbReference type="EMBL" id="CP000961">
    <property type="protein sequence ID" value="ACA86105.1"/>
    <property type="molecule type" value="Genomic_DNA"/>
</dbReference>
<dbReference type="RefSeq" id="WP_012324451.1">
    <property type="nucleotide sequence ID" value="NC_010506.1"/>
</dbReference>
<dbReference type="SMR" id="B1KNM8"/>
<dbReference type="STRING" id="392500.Swoo_1821"/>
<dbReference type="KEGG" id="swd:Swoo_1821"/>
<dbReference type="eggNOG" id="COG2835">
    <property type="taxonomic scope" value="Bacteria"/>
</dbReference>
<dbReference type="HOGENOM" id="CLU_155659_3_1_6"/>
<dbReference type="Proteomes" id="UP000002168">
    <property type="component" value="Chromosome"/>
</dbReference>
<dbReference type="GO" id="GO:0005829">
    <property type="term" value="C:cytosol"/>
    <property type="evidence" value="ECO:0007669"/>
    <property type="project" value="TreeGrafter"/>
</dbReference>
<dbReference type="FunFam" id="2.20.25.10:FF:000002">
    <property type="entry name" value="UPF0434 protein YcaR"/>
    <property type="match status" value="1"/>
</dbReference>
<dbReference type="Gene3D" id="2.20.25.10">
    <property type="match status" value="1"/>
</dbReference>
<dbReference type="HAMAP" id="MF_01187">
    <property type="entry name" value="UPF0434"/>
    <property type="match status" value="1"/>
</dbReference>
<dbReference type="InterPro" id="IPR005651">
    <property type="entry name" value="Trm112-like"/>
</dbReference>
<dbReference type="PANTHER" id="PTHR33505:SF4">
    <property type="entry name" value="PROTEIN PREY, MITOCHONDRIAL"/>
    <property type="match status" value="1"/>
</dbReference>
<dbReference type="PANTHER" id="PTHR33505">
    <property type="entry name" value="ZGC:162634"/>
    <property type="match status" value="1"/>
</dbReference>
<dbReference type="Pfam" id="PF03966">
    <property type="entry name" value="Trm112p"/>
    <property type="match status" value="1"/>
</dbReference>
<dbReference type="SUPFAM" id="SSF158997">
    <property type="entry name" value="Trm112p-like"/>
    <property type="match status" value="1"/>
</dbReference>
<feature type="chain" id="PRO_1000138336" description="UPF0434 protein Swoo_1821">
    <location>
        <begin position="1"/>
        <end position="58"/>
    </location>
</feature>
<gene>
    <name type="ordered locus">Swoo_1821</name>
</gene>
<keyword id="KW-1185">Reference proteome</keyword>
<sequence length="58" mass="6596">MSFDKKLLEIVACPVCKGKLDYDKAKQQLICKLDRLAYPINDGIPVLLENKAESWEEA</sequence>
<accession>B1KNM8</accession>
<comment type="similarity">
    <text evidence="1">Belongs to the UPF0434 family.</text>
</comment>
<evidence type="ECO:0000255" key="1">
    <source>
        <dbReference type="HAMAP-Rule" id="MF_01187"/>
    </source>
</evidence>
<name>Y1821_SHEWM</name>
<protein>
    <recommendedName>
        <fullName evidence="1">UPF0434 protein Swoo_1821</fullName>
    </recommendedName>
</protein>